<sequence>MRIEKCYFCSGPIYPGHGMMFVRNDCKVFRFCKSKCHKNFKKKRNPRKVRWTKAFRKAAGKELTVDNSFEFEKRRNEPIKYQRELWNKTIDAMKRVEEIKQKRQAKFIMNRLKKNKELQKVQDIKEVKQNIHLIRAPLAGKGKQLEEKMVQQLQEDVDMEDAP</sequence>
<organism>
    <name type="scientific">Homo sapiens</name>
    <name type="common">Human</name>
    <dbReference type="NCBI Taxonomy" id="9606"/>
    <lineage>
        <taxon>Eukaryota</taxon>
        <taxon>Metazoa</taxon>
        <taxon>Chordata</taxon>
        <taxon>Craniata</taxon>
        <taxon>Vertebrata</taxon>
        <taxon>Euteleostomi</taxon>
        <taxon>Mammalia</taxon>
        <taxon>Eutheria</taxon>
        <taxon>Euarchontoglires</taxon>
        <taxon>Primates</taxon>
        <taxon>Haplorrhini</taxon>
        <taxon>Catarrhini</taxon>
        <taxon>Hominidae</taxon>
        <taxon>Homo</taxon>
    </lineage>
</organism>
<comment type="function">
    <text evidence="1">Involved in the biogenesis of the 60S ribosomal subunit. Ensures the docking of GTPBP4/NOG1 to pre-60S particles (By similarity).</text>
</comment>
<comment type="subunit">
    <text evidence="1 3">Associated with nucleolar and cytoplasmic pre-60S particles (PubMed:32669547). At the end of biogenesis it dissociates from cytoplasmic pre-60S particles and is likely to be exchanged for its ribosomal homolog, RPL24 (By similarity).</text>
</comment>
<comment type="interaction">
    <interactant intactId="EBI-749321">
        <id>Q9UHA3</id>
    </interactant>
    <interactant intactId="EBI-396137">
        <id>Q9UJX2</id>
        <label>CDC23</label>
    </interactant>
    <organismsDiffer>false</organismsDiffer>
    <experiments>3</experiments>
</comment>
<comment type="interaction">
    <interactant intactId="EBI-749321">
        <id>Q9UHA3</id>
    </interactant>
    <interactant intactId="EBI-740967">
        <id>Q9UJW3</id>
        <label>DNMT3L</label>
    </interactant>
    <organismsDiffer>false</organismsDiffer>
    <experiments>7</experiments>
</comment>
<comment type="interaction">
    <interactant intactId="EBI-749321">
        <id>Q9UHA3</id>
    </interactant>
    <interactant intactId="EBI-10175124">
        <id>Q8IZU0</id>
        <label>FAM9B</label>
    </interactant>
    <organismsDiffer>false</organismsDiffer>
    <experiments>3</experiments>
</comment>
<comment type="subcellular location">
    <subcellularLocation>
        <location evidence="2 4">Nucleus</location>
        <location evidence="2 4">Nucleolus</location>
    </subcellularLocation>
</comment>
<comment type="similarity">
    <text evidence="5">Belongs to the eukaryotic ribosomal protein eL24 family.</text>
</comment>
<reference key="1">
    <citation type="submission" date="1999-11" db="EMBL/GenBank/DDBJ databases">
        <title>Novel genes expressed in human dendritic cells.</title>
        <authorList>
            <person name="Li Y."/>
            <person name="Peng Y."/>
            <person name="Li N."/>
            <person name="Gu W."/>
            <person name="Han Z."/>
            <person name="Fu G."/>
            <person name="Chen Z."/>
        </authorList>
    </citation>
    <scope>NUCLEOTIDE SEQUENCE [LARGE SCALE MRNA]</scope>
    <source>
        <tissue>Dendritic cell</tissue>
    </source>
</reference>
<reference key="2">
    <citation type="submission" date="1998-04" db="EMBL/GenBank/DDBJ databases">
        <authorList>
            <person name="Mao Y.M."/>
            <person name="Xie Y."/>
            <person name="Lin Q."/>
            <person name="Mu Z.M."/>
            <person name="Yuan Y.Z."/>
        </authorList>
    </citation>
    <scope>NUCLEOTIDE SEQUENCE [LARGE SCALE MRNA]</scope>
    <source>
        <tissue>Fetal brain</tissue>
    </source>
</reference>
<reference key="3">
    <citation type="submission" date="1999-07" db="EMBL/GenBank/DDBJ databases">
        <title>Novel genes expressed in hematopoietic stem/progenitor cells from myelodysplastic syndrome patients.</title>
        <authorList>
            <person name="Gu J."/>
            <person name="Huang Q."/>
            <person name="Yu Y."/>
            <person name="Xu S."/>
            <person name="Wang Y."/>
            <person name="Han Z."/>
            <person name="Chen Z."/>
            <person name="Zhou J."/>
            <person name="Tu Y."/>
            <person name="Gu W."/>
            <person name="Fu G."/>
            <person name="Huang C."/>
        </authorList>
    </citation>
    <scope>NUCLEOTIDE SEQUENCE [LARGE SCALE MRNA]</scope>
    <source>
        <tissue>Hematopoietic stem cell</tissue>
    </source>
</reference>
<reference key="4">
    <citation type="submission" date="1999-12" db="EMBL/GenBank/DDBJ databases">
        <title>A novel gene expressed in human liver.</title>
        <authorList>
            <person name="Peng Y."/>
            <person name="Li Y."/>
            <person name="Tu Y."/>
            <person name="Xu S."/>
            <person name="Han Z."/>
            <person name="Fu G."/>
            <person name="Chen Z."/>
        </authorList>
    </citation>
    <scope>NUCLEOTIDE SEQUENCE [MRNA]</scope>
    <source>
        <tissue>Liver</tissue>
    </source>
</reference>
<reference key="5">
    <citation type="submission" date="2004-06" db="EMBL/GenBank/DDBJ databases">
        <title>Cloning of human full open reading frames in Gateway(TM) system entry vector (pDONR201).</title>
        <authorList>
            <person name="Ebert L."/>
            <person name="Schick M."/>
            <person name="Neubert P."/>
            <person name="Schatten R."/>
            <person name="Henze S."/>
            <person name="Korn B."/>
        </authorList>
    </citation>
    <scope>NUCLEOTIDE SEQUENCE [LARGE SCALE MRNA]</scope>
</reference>
<reference key="6">
    <citation type="journal article" date="2004" name="Nat. Genet.">
        <title>Complete sequencing and characterization of 21,243 full-length human cDNAs.</title>
        <authorList>
            <person name="Ota T."/>
            <person name="Suzuki Y."/>
            <person name="Nishikawa T."/>
            <person name="Otsuki T."/>
            <person name="Sugiyama T."/>
            <person name="Irie R."/>
            <person name="Wakamatsu A."/>
            <person name="Hayashi K."/>
            <person name="Sato H."/>
            <person name="Nagai K."/>
            <person name="Kimura K."/>
            <person name="Makita H."/>
            <person name="Sekine M."/>
            <person name="Obayashi M."/>
            <person name="Nishi T."/>
            <person name="Shibahara T."/>
            <person name="Tanaka T."/>
            <person name="Ishii S."/>
            <person name="Yamamoto J."/>
            <person name="Saito K."/>
            <person name="Kawai Y."/>
            <person name="Isono Y."/>
            <person name="Nakamura Y."/>
            <person name="Nagahari K."/>
            <person name="Murakami K."/>
            <person name="Yasuda T."/>
            <person name="Iwayanagi T."/>
            <person name="Wagatsuma M."/>
            <person name="Shiratori A."/>
            <person name="Sudo H."/>
            <person name="Hosoiri T."/>
            <person name="Kaku Y."/>
            <person name="Kodaira H."/>
            <person name="Kondo H."/>
            <person name="Sugawara M."/>
            <person name="Takahashi M."/>
            <person name="Kanda K."/>
            <person name="Yokoi T."/>
            <person name="Furuya T."/>
            <person name="Kikkawa E."/>
            <person name="Omura Y."/>
            <person name="Abe K."/>
            <person name="Kamihara K."/>
            <person name="Katsuta N."/>
            <person name="Sato K."/>
            <person name="Tanikawa M."/>
            <person name="Yamazaki M."/>
            <person name="Ninomiya K."/>
            <person name="Ishibashi T."/>
            <person name="Yamashita H."/>
            <person name="Murakawa K."/>
            <person name="Fujimori K."/>
            <person name="Tanai H."/>
            <person name="Kimata M."/>
            <person name="Watanabe M."/>
            <person name="Hiraoka S."/>
            <person name="Chiba Y."/>
            <person name="Ishida S."/>
            <person name="Ono Y."/>
            <person name="Takiguchi S."/>
            <person name="Watanabe S."/>
            <person name="Yosida M."/>
            <person name="Hotuta T."/>
            <person name="Kusano J."/>
            <person name="Kanehori K."/>
            <person name="Takahashi-Fujii A."/>
            <person name="Hara H."/>
            <person name="Tanase T.-O."/>
            <person name="Nomura Y."/>
            <person name="Togiya S."/>
            <person name="Komai F."/>
            <person name="Hara R."/>
            <person name="Takeuchi K."/>
            <person name="Arita M."/>
            <person name="Imose N."/>
            <person name="Musashino K."/>
            <person name="Yuuki H."/>
            <person name="Oshima A."/>
            <person name="Sasaki N."/>
            <person name="Aotsuka S."/>
            <person name="Yoshikawa Y."/>
            <person name="Matsunawa H."/>
            <person name="Ichihara T."/>
            <person name="Shiohata N."/>
            <person name="Sano S."/>
            <person name="Moriya S."/>
            <person name="Momiyama H."/>
            <person name="Satoh N."/>
            <person name="Takami S."/>
            <person name="Terashima Y."/>
            <person name="Suzuki O."/>
            <person name="Nakagawa S."/>
            <person name="Senoh A."/>
            <person name="Mizoguchi H."/>
            <person name="Goto Y."/>
            <person name="Shimizu F."/>
            <person name="Wakebe H."/>
            <person name="Hishigaki H."/>
            <person name="Watanabe T."/>
            <person name="Sugiyama A."/>
            <person name="Takemoto M."/>
            <person name="Kawakami B."/>
            <person name="Yamazaki M."/>
            <person name="Watanabe K."/>
            <person name="Kumagai A."/>
            <person name="Itakura S."/>
            <person name="Fukuzumi Y."/>
            <person name="Fujimori Y."/>
            <person name="Komiyama M."/>
            <person name="Tashiro H."/>
            <person name="Tanigami A."/>
            <person name="Fujiwara T."/>
            <person name="Ono T."/>
            <person name="Yamada K."/>
            <person name="Fujii Y."/>
            <person name="Ozaki K."/>
            <person name="Hirao M."/>
            <person name="Ohmori Y."/>
            <person name="Kawabata A."/>
            <person name="Hikiji T."/>
            <person name="Kobatake N."/>
            <person name="Inagaki H."/>
            <person name="Ikema Y."/>
            <person name="Okamoto S."/>
            <person name="Okitani R."/>
            <person name="Kawakami T."/>
            <person name="Noguchi S."/>
            <person name="Itoh T."/>
            <person name="Shigeta K."/>
            <person name="Senba T."/>
            <person name="Matsumura K."/>
            <person name="Nakajima Y."/>
            <person name="Mizuno T."/>
            <person name="Morinaga M."/>
            <person name="Sasaki M."/>
            <person name="Togashi T."/>
            <person name="Oyama M."/>
            <person name="Hata H."/>
            <person name="Watanabe M."/>
            <person name="Komatsu T."/>
            <person name="Mizushima-Sugano J."/>
            <person name="Satoh T."/>
            <person name="Shirai Y."/>
            <person name="Takahashi Y."/>
            <person name="Nakagawa K."/>
            <person name="Okumura K."/>
            <person name="Nagase T."/>
            <person name="Nomura N."/>
            <person name="Kikuchi H."/>
            <person name="Masuho Y."/>
            <person name="Yamashita R."/>
            <person name="Nakai K."/>
            <person name="Yada T."/>
            <person name="Nakamura Y."/>
            <person name="Ohara O."/>
            <person name="Isogai T."/>
            <person name="Sugano S."/>
        </authorList>
    </citation>
    <scope>NUCLEOTIDE SEQUENCE [LARGE SCALE MRNA]</scope>
    <source>
        <tissue>Brain</tissue>
    </source>
</reference>
<reference key="7">
    <citation type="submission" date="2005-07" db="EMBL/GenBank/DDBJ databases">
        <authorList>
            <person name="Mural R.J."/>
            <person name="Istrail S."/>
            <person name="Sutton G.G."/>
            <person name="Florea L."/>
            <person name="Halpern A.L."/>
            <person name="Mobarry C.M."/>
            <person name="Lippert R."/>
            <person name="Walenz B."/>
            <person name="Shatkay H."/>
            <person name="Dew I."/>
            <person name="Miller J.R."/>
            <person name="Flanigan M.J."/>
            <person name="Edwards N.J."/>
            <person name="Bolanos R."/>
            <person name="Fasulo D."/>
            <person name="Halldorsson B.V."/>
            <person name="Hannenhalli S."/>
            <person name="Turner R."/>
            <person name="Yooseph S."/>
            <person name="Lu F."/>
            <person name="Nusskern D.R."/>
            <person name="Shue B.C."/>
            <person name="Zheng X.H."/>
            <person name="Zhong F."/>
            <person name="Delcher A.L."/>
            <person name="Huson D.H."/>
            <person name="Kravitz S.A."/>
            <person name="Mouchard L."/>
            <person name="Reinert K."/>
            <person name="Remington K.A."/>
            <person name="Clark A.G."/>
            <person name="Waterman M.S."/>
            <person name="Eichler E.E."/>
            <person name="Adams M.D."/>
            <person name="Hunkapiller M.W."/>
            <person name="Myers E.W."/>
            <person name="Venter J.C."/>
        </authorList>
    </citation>
    <scope>NUCLEOTIDE SEQUENCE [LARGE SCALE GENOMIC DNA]</scope>
</reference>
<reference key="8">
    <citation type="journal article" date="2004" name="Genome Res.">
        <title>The status, quality, and expansion of the NIH full-length cDNA project: the Mammalian Gene Collection (MGC).</title>
        <authorList>
            <consortium name="The MGC Project Team"/>
        </authorList>
    </citation>
    <scope>NUCLEOTIDE SEQUENCE [LARGE SCALE MRNA]</scope>
    <source>
        <tissue>Blood</tissue>
        <tissue>Bone marrow</tissue>
        <tissue>Brain</tissue>
        <tissue>Lung</tissue>
        <tissue>Urinary bladder</tissue>
    </source>
</reference>
<reference key="9">
    <citation type="journal article" date="2002" name="Mol. Biol. Cell">
        <title>Functional proteomic analysis of human nucleolus.</title>
        <authorList>
            <person name="Scherl A."/>
            <person name="Coute Y."/>
            <person name="Deon C."/>
            <person name="Calle A."/>
            <person name="Kindbeiter K."/>
            <person name="Sanchez J.-C."/>
            <person name="Greco A."/>
            <person name="Hochstrasser D.F."/>
            <person name="Diaz J.-J."/>
        </authorList>
    </citation>
    <scope>SUBCELLULAR LOCATION [LARGE SCALE ANALYSIS]</scope>
    <source>
        <tissue>Cervix carcinoma</tissue>
    </source>
</reference>
<reference key="10">
    <citation type="journal article" date="2022" name="Cell Rep.">
        <title>Labeling of heterochronic ribosomes reveals C1ORF109 and SPATA5 control a late step in human ribosome assembly.</title>
        <authorList>
            <person name="Ni C."/>
            <person name="Schmitz D.A."/>
            <person name="Lee J."/>
            <person name="Pawlowski K."/>
            <person name="Wu J."/>
            <person name="Buszczak M."/>
        </authorList>
    </citation>
    <scope>SUBCELLULAR LOCATION</scope>
</reference>
<reference evidence="6 7" key="11">
    <citation type="journal article" date="2020" name="Nat. Commun.">
        <title>Structural snapshots of human pre-60S ribosomal particles before and after nuclear export.</title>
        <authorList>
            <person name="Liang X."/>
            <person name="Zuo M.Q."/>
            <person name="Zhang Y."/>
            <person name="Li N."/>
            <person name="Ma C."/>
            <person name="Dong M.Q."/>
            <person name="Gao N."/>
        </authorList>
    </citation>
    <scope>STRUCTURE BY ELECTRON MICROSCOPY (3.13 ANGSTROMS) IN COMPLEX WITH PRE-60S RIBOSOMAL PARTICLES</scope>
    <scope>INTERACTION WITH PRE-60S RIBOSOMAL PARTICLES</scope>
</reference>
<dbReference type="EMBL" id="AF201949">
    <property type="protein sequence ID" value="AAF17241.1"/>
    <property type="molecule type" value="mRNA"/>
</dbReference>
<dbReference type="EMBL" id="AF060926">
    <property type="protein sequence ID" value="AAG43138.1"/>
    <property type="molecule type" value="mRNA"/>
</dbReference>
<dbReference type="EMBL" id="AF165521">
    <property type="protein sequence ID" value="AAF86651.1"/>
    <property type="molecule type" value="mRNA"/>
</dbReference>
<dbReference type="EMBL" id="AF212226">
    <property type="protein sequence ID" value="AAK26249.1"/>
    <property type="molecule type" value="mRNA"/>
</dbReference>
<dbReference type="EMBL" id="CR457179">
    <property type="protein sequence ID" value="CAG33460.1"/>
    <property type="molecule type" value="mRNA"/>
</dbReference>
<dbReference type="EMBL" id="AK315431">
    <property type="protein sequence ID" value="BAG37819.1"/>
    <property type="molecule type" value="mRNA"/>
</dbReference>
<dbReference type="EMBL" id="CH471082">
    <property type="protein sequence ID" value="EAW77473.1"/>
    <property type="molecule type" value="Genomic_DNA"/>
</dbReference>
<dbReference type="EMBL" id="BC008409">
    <property type="protein sequence ID" value="AAH08409.1"/>
    <property type="molecule type" value="mRNA"/>
</dbReference>
<dbReference type="EMBL" id="BC008422">
    <property type="protein sequence ID" value="AAH08422.1"/>
    <property type="molecule type" value="mRNA"/>
</dbReference>
<dbReference type="EMBL" id="BC008449">
    <property type="protein sequence ID" value="AAH08449.1"/>
    <property type="molecule type" value="mRNA"/>
</dbReference>
<dbReference type="EMBL" id="BC008499">
    <property type="protein sequence ID" value="AAH08499.1"/>
    <property type="molecule type" value="mRNA"/>
</dbReference>
<dbReference type="EMBL" id="BC009593">
    <property type="protein sequence ID" value="AAH09593.1"/>
    <property type="molecule type" value="mRNA"/>
</dbReference>
<dbReference type="EMBL" id="BC009604">
    <property type="protein sequence ID" value="AAH09604.1"/>
    <property type="molecule type" value="mRNA"/>
</dbReference>
<dbReference type="EMBL" id="BC012913">
    <property type="protein sequence ID" value="AAH12913.1"/>
    <property type="molecule type" value="mRNA"/>
</dbReference>
<dbReference type="EMBL" id="BC014576">
    <property type="protein sequence ID" value="AAH14576.1"/>
    <property type="molecule type" value="mRNA"/>
</dbReference>
<dbReference type="EMBL" id="BC016312">
    <property type="protein sequence ID" value="AAH16312.1"/>
    <property type="molecule type" value="mRNA"/>
</dbReference>
<dbReference type="EMBL" id="BC016331">
    <property type="protein sequence ID" value="AAH16331.1"/>
    <property type="molecule type" value="mRNA"/>
</dbReference>
<dbReference type="EMBL" id="BC016725">
    <property type="protein sequence ID" value="AAH16725.1"/>
    <property type="molecule type" value="mRNA"/>
</dbReference>
<dbReference type="EMBL" id="BC016777">
    <property type="protein sequence ID" value="AAH16777.1"/>
    <property type="molecule type" value="mRNA"/>
</dbReference>
<dbReference type="EMBL" id="BC026266">
    <property type="protein sequence ID" value="AAH26266.1"/>
    <property type="molecule type" value="mRNA"/>
</dbReference>
<dbReference type="EMBL" id="BC026267">
    <property type="protein sequence ID" value="AAH26267.1"/>
    <property type="molecule type" value="mRNA"/>
</dbReference>
<dbReference type="EMBL" id="BC028672">
    <property type="protein sequence ID" value="AAH28672.1"/>
    <property type="molecule type" value="mRNA"/>
</dbReference>
<dbReference type="EMBL" id="BC035995">
    <property type="protein sequence ID" value="AAH35995.1"/>
    <property type="molecule type" value="mRNA"/>
</dbReference>
<dbReference type="EMBL" id="BC093067">
    <property type="protein sequence ID" value="AAH93067.1"/>
    <property type="molecule type" value="mRNA"/>
</dbReference>
<dbReference type="CCDS" id="CCDS10152.1"/>
<dbReference type="RefSeq" id="NP_057388.1">
    <property type="nucleotide sequence ID" value="NM_016304.3"/>
</dbReference>
<dbReference type="PDB" id="6LSS">
    <property type="method" value="EM"/>
    <property type="resolution" value="3.23 A"/>
    <property type="chains" value="7=1-163"/>
</dbReference>
<dbReference type="PDB" id="6LU8">
    <property type="method" value="EM"/>
    <property type="resolution" value="3.13 A"/>
    <property type="chains" value="7=1-163"/>
</dbReference>
<dbReference type="PDB" id="8FKP">
    <property type="method" value="EM"/>
    <property type="resolution" value="2.85 A"/>
    <property type="chains" value="SV=1-163"/>
</dbReference>
<dbReference type="PDB" id="8FKQ">
    <property type="method" value="EM"/>
    <property type="resolution" value="2.76 A"/>
    <property type="chains" value="SV=1-163"/>
</dbReference>
<dbReference type="PDB" id="8FKR">
    <property type="method" value="EM"/>
    <property type="resolution" value="2.89 A"/>
    <property type="chains" value="SV=1-163"/>
</dbReference>
<dbReference type="PDB" id="8FKS">
    <property type="method" value="EM"/>
    <property type="resolution" value="2.88 A"/>
    <property type="chains" value="SV=1-163"/>
</dbReference>
<dbReference type="PDB" id="8FKT">
    <property type="method" value="EM"/>
    <property type="resolution" value="2.81 A"/>
    <property type="chains" value="SV=1-163"/>
</dbReference>
<dbReference type="PDB" id="8FKU">
    <property type="method" value="EM"/>
    <property type="resolution" value="2.82 A"/>
    <property type="chains" value="SV=1-163"/>
</dbReference>
<dbReference type="PDB" id="8FKV">
    <property type="method" value="EM"/>
    <property type="resolution" value="2.47 A"/>
    <property type="chains" value="SV=1-163"/>
</dbReference>
<dbReference type="PDB" id="8FKW">
    <property type="method" value="EM"/>
    <property type="resolution" value="2.50 A"/>
    <property type="chains" value="SV=1-163"/>
</dbReference>
<dbReference type="PDB" id="8FKX">
    <property type="method" value="EM"/>
    <property type="resolution" value="2.59 A"/>
    <property type="chains" value="SV=1-163"/>
</dbReference>
<dbReference type="PDB" id="8FKY">
    <property type="method" value="EM"/>
    <property type="resolution" value="2.67 A"/>
    <property type="chains" value="SV=1-163"/>
</dbReference>
<dbReference type="PDB" id="8FKZ">
    <property type="method" value="EM"/>
    <property type="resolution" value="3.04 A"/>
    <property type="chains" value="SV=1-163"/>
</dbReference>
<dbReference type="PDB" id="8FL0">
    <property type="method" value="EM"/>
    <property type="resolution" value="2.91 A"/>
    <property type="chains" value="SV=1-163"/>
</dbReference>
<dbReference type="PDB" id="8FL2">
    <property type="method" value="EM"/>
    <property type="resolution" value="2.67 A"/>
    <property type="chains" value="SV=1-163"/>
</dbReference>
<dbReference type="PDB" id="8FL3">
    <property type="method" value="EM"/>
    <property type="resolution" value="2.53 A"/>
    <property type="chains" value="SV=1-163"/>
</dbReference>
<dbReference type="PDB" id="8FL4">
    <property type="method" value="EM"/>
    <property type="resolution" value="2.89 A"/>
    <property type="chains" value="SV=1-163"/>
</dbReference>
<dbReference type="PDB" id="8FL6">
    <property type="method" value="EM"/>
    <property type="resolution" value="2.62 A"/>
    <property type="chains" value="SV=1-163"/>
</dbReference>
<dbReference type="PDB" id="8FL7">
    <property type="method" value="EM"/>
    <property type="resolution" value="2.55 A"/>
    <property type="chains" value="SV=1-163"/>
</dbReference>
<dbReference type="PDB" id="8FL9">
    <property type="method" value="EM"/>
    <property type="resolution" value="2.75 A"/>
    <property type="chains" value="SV=1-163"/>
</dbReference>
<dbReference type="PDB" id="8FLA">
    <property type="method" value="EM"/>
    <property type="resolution" value="2.63 A"/>
    <property type="chains" value="SV=1-163"/>
</dbReference>
<dbReference type="PDB" id="8FLB">
    <property type="method" value="EM"/>
    <property type="resolution" value="2.55 A"/>
    <property type="chains" value="SV=1-163"/>
</dbReference>
<dbReference type="PDB" id="8FLC">
    <property type="method" value="EM"/>
    <property type="resolution" value="2.76 A"/>
    <property type="chains" value="SV=1-163"/>
</dbReference>
<dbReference type="PDB" id="8FLD">
    <property type="method" value="EM"/>
    <property type="resolution" value="2.58 A"/>
    <property type="chains" value="SV=1-163"/>
</dbReference>
<dbReference type="PDB" id="8FLE">
    <property type="method" value="EM"/>
    <property type="resolution" value="2.48 A"/>
    <property type="chains" value="SV=1-163"/>
</dbReference>
<dbReference type="PDB" id="8FLF">
    <property type="method" value="EM"/>
    <property type="resolution" value="2.65 A"/>
    <property type="chains" value="SV=1-163"/>
</dbReference>
<dbReference type="PDB" id="8IDT">
    <property type="method" value="EM"/>
    <property type="resolution" value="2.80 A"/>
    <property type="chains" value="7=1-163"/>
</dbReference>
<dbReference type="PDB" id="8IDY">
    <property type="method" value="EM"/>
    <property type="resolution" value="3.00 A"/>
    <property type="chains" value="7=1-163"/>
</dbReference>
<dbReference type="PDB" id="8IE3">
    <property type="method" value="EM"/>
    <property type="resolution" value="3.30 A"/>
    <property type="chains" value="7=1-163"/>
</dbReference>
<dbReference type="PDB" id="8INE">
    <property type="method" value="EM"/>
    <property type="resolution" value="3.20 A"/>
    <property type="chains" value="7=1-163"/>
</dbReference>
<dbReference type="PDB" id="8INF">
    <property type="method" value="EM"/>
    <property type="resolution" value="3.00 A"/>
    <property type="chains" value="7=1-163"/>
</dbReference>
<dbReference type="PDB" id="8INK">
    <property type="method" value="EM"/>
    <property type="resolution" value="3.20 A"/>
    <property type="chains" value="7=1-163"/>
</dbReference>
<dbReference type="PDB" id="8IPD">
    <property type="method" value="EM"/>
    <property type="resolution" value="3.20 A"/>
    <property type="chains" value="7=1-163"/>
</dbReference>
<dbReference type="PDB" id="8IPX">
    <property type="method" value="EM"/>
    <property type="resolution" value="4.30 A"/>
    <property type="chains" value="7=1-163"/>
</dbReference>
<dbReference type="PDB" id="8IPY">
    <property type="method" value="EM"/>
    <property type="resolution" value="3.20 A"/>
    <property type="chains" value="7=1-163"/>
</dbReference>
<dbReference type="PDB" id="8IR1">
    <property type="method" value="EM"/>
    <property type="resolution" value="3.30 A"/>
    <property type="chains" value="7=1-163"/>
</dbReference>
<dbReference type="PDB" id="8IR3">
    <property type="method" value="EM"/>
    <property type="resolution" value="3.50 A"/>
    <property type="chains" value="7=1-163"/>
</dbReference>
<dbReference type="PDB" id="8RL2">
    <property type="method" value="EM"/>
    <property type="resolution" value="2.84 A"/>
    <property type="chains" value="CI=1-163"/>
</dbReference>
<dbReference type="PDBsum" id="6LSS"/>
<dbReference type="PDBsum" id="6LU8"/>
<dbReference type="PDBsum" id="8FKP"/>
<dbReference type="PDBsum" id="8FKQ"/>
<dbReference type="PDBsum" id="8FKR"/>
<dbReference type="PDBsum" id="8FKS"/>
<dbReference type="PDBsum" id="8FKT"/>
<dbReference type="PDBsum" id="8FKU"/>
<dbReference type="PDBsum" id="8FKV"/>
<dbReference type="PDBsum" id="8FKW"/>
<dbReference type="PDBsum" id="8FKX"/>
<dbReference type="PDBsum" id="8FKY"/>
<dbReference type="PDBsum" id="8FKZ"/>
<dbReference type="PDBsum" id="8FL0"/>
<dbReference type="PDBsum" id="8FL2"/>
<dbReference type="PDBsum" id="8FL3"/>
<dbReference type="PDBsum" id="8FL4"/>
<dbReference type="PDBsum" id="8FL6"/>
<dbReference type="PDBsum" id="8FL7"/>
<dbReference type="PDBsum" id="8FL9"/>
<dbReference type="PDBsum" id="8FLA"/>
<dbReference type="PDBsum" id="8FLB"/>
<dbReference type="PDBsum" id="8FLC"/>
<dbReference type="PDBsum" id="8FLD"/>
<dbReference type="PDBsum" id="8FLE"/>
<dbReference type="PDBsum" id="8FLF"/>
<dbReference type="PDBsum" id="8IDT"/>
<dbReference type="PDBsum" id="8IDY"/>
<dbReference type="PDBsum" id="8IE3"/>
<dbReference type="PDBsum" id="8INE"/>
<dbReference type="PDBsum" id="8INF"/>
<dbReference type="PDBsum" id="8INK"/>
<dbReference type="PDBsum" id="8IPD"/>
<dbReference type="PDBsum" id="8IPX"/>
<dbReference type="PDBsum" id="8IPY"/>
<dbReference type="PDBsum" id="8IR1"/>
<dbReference type="PDBsum" id="8IR3"/>
<dbReference type="PDBsum" id="8RL2"/>
<dbReference type="EMDB" id="EMD-0964"/>
<dbReference type="EMDB" id="EMD-0978"/>
<dbReference type="EMDB" id="EMD-19330"/>
<dbReference type="EMDB" id="EMD-29252"/>
<dbReference type="EMDB" id="EMD-29253"/>
<dbReference type="EMDB" id="EMD-29254"/>
<dbReference type="EMDB" id="EMD-29255"/>
<dbReference type="EMDB" id="EMD-29256"/>
<dbReference type="EMDB" id="EMD-29257"/>
<dbReference type="EMDB" id="EMD-29258"/>
<dbReference type="EMDB" id="EMD-29259"/>
<dbReference type="EMDB" id="EMD-29260"/>
<dbReference type="EMDB" id="EMD-29261"/>
<dbReference type="EMDB" id="EMD-29262"/>
<dbReference type="EMDB" id="EMD-29263"/>
<dbReference type="EMDB" id="EMD-29265"/>
<dbReference type="EMDB" id="EMD-29266"/>
<dbReference type="EMDB" id="EMD-29267"/>
<dbReference type="EMDB" id="EMD-29268"/>
<dbReference type="EMDB" id="EMD-29269"/>
<dbReference type="EMDB" id="EMD-29271"/>
<dbReference type="EMDB" id="EMD-29272"/>
<dbReference type="EMDB" id="EMD-29273"/>
<dbReference type="EMDB" id="EMD-29274"/>
<dbReference type="EMDB" id="EMD-29275"/>
<dbReference type="EMDB" id="EMD-29276"/>
<dbReference type="EMDB" id="EMD-29277"/>
<dbReference type="EMDB" id="EMD-35370"/>
<dbReference type="EMDB" id="EMD-35371"/>
<dbReference type="EMDB" id="EMD-35375"/>
<dbReference type="EMDB" id="EMD-35596"/>
<dbReference type="EMDB" id="EMD-35597"/>
<dbReference type="EMDB" id="EMD-35599"/>
<dbReference type="EMDB" id="EMD-35639"/>
<dbReference type="EMDB" id="EMD-35649"/>
<dbReference type="EMDB" id="EMD-35651"/>
<dbReference type="EMDB" id="EMD-35672"/>
<dbReference type="EMDB" id="EMD-35673"/>
<dbReference type="SMR" id="Q9UHA3"/>
<dbReference type="BioGRID" id="119362">
    <property type="interactions" value="125"/>
</dbReference>
<dbReference type="CORUM" id="Q9UHA3"/>
<dbReference type="FunCoup" id="Q9UHA3">
    <property type="interactions" value="2584"/>
</dbReference>
<dbReference type="IntAct" id="Q9UHA3">
    <property type="interactions" value="76"/>
</dbReference>
<dbReference type="MINT" id="Q9UHA3"/>
<dbReference type="STRING" id="9606.ENSP00000260443"/>
<dbReference type="DrugBank" id="DB02494">
    <property type="generic name" value="(S)-3-phenyllactic acid"/>
</dbReference>
<dbReference type="DrugBank" id="DB07374">
    <property type="generic name" value="Anisomycin"/>
</dbReference>
<dbReference type="DrugBank" id="DB08437">
    <property type="generic name" value="Puromycin"/>
</dbReference>
<dbReference type="GlyGen" id="Q9UHA3">
    <property type="glycosylation" value="1 site, 1 O-linked glycan (1 site)"/>
</dbReference>
<dbReference type="iPTMnet" id="Q9UHA3"/>
<dbReference type="PhosphoSitePlus" id="Q9UHA3"/>
<dbReference type="BioMuta" id="RSL24D1"/>
<dbReference type="DMDM" id="52783333"/>
<dbReference type="jPOST" id="Q9UHA3"/>
<dbReference type="MassIVE" id="Q9UHA3"/>
<dbReference type="PaxDb" id="9606-ENSP00000260443"/>
<dbReference type="PeptideAtlas" id="Q9UHA3"/>
<dbReference type="ProteomicsDB" id="84291"/>
<dbReference type="Pumba" id="Q9UHA3"/>
<dbReference type="Antibodypedia" id="25045">
    <property type="antibodies" value="78 antibodies from 19 providers"/>
</dbReference>
<dbReference type="DNASU" id="51187"/>
<dbReference type="Ensembl" id="ENST00000260443.9">
    <property type="protein sequence ID" value="ENSP00000260443.4"/>
    <property type="gene ID" value="ENSG00000137876.11"/>
</dbReference>
<dbReference type="GeneID" id="51187"/>
<dbReference type="KEGG" id="hsa:51187"/>
<dbReference type="MANE-Select" id="ENST00000260443.9">
    <property type="protein sequence ID" value="ENSP00000260443.4"/>
    <property type="RefSeq nucleotide sequence ID" value="NM_016304.3"/>
    <property type="RefSeq protein sequence ID" value="NP_057388.1"/>
</dbReference>
<dbReference type="UCSC" id="uc002acn.4">
    <property type="organism name" value="human"/>
</dbReference>
<dbReference type="AGR" id="HGNC:18479"/>
<dbReference type="CTD" id="51187"/>
<dbReference type="DisGeNET" id="51187"/>
<dbReference type="GeneCards" id="RSL24D1"/>
<dbReference type="HGNC" id="HGNC:18479">
    <property type="gene designation" value="RSL24D1"/>
</dbReference>
<dbReference type="HPA" id="ENSG00000137876">
    <property type="expression patterns" value="Low tissue specificity"/>
</dbReference>
<dbReference type="MIM" id="613262">
    <property type="type" value="gene"/>
</dbReference>
<dbReference type="neXtProt" id="NX_Q9UHA3"/>
<dbReference type="OpenTargets" id="ENSG00000137876"/>
<dbReference type="PharmGKB" id="PA164725551"/>
<dbReference type="VEuPathDB" id="HostDB:ENSG00000137876"/>
<dbReference type="eggNOG" id="KOG1723">
    <property type="taxonomic scope" value="Eukaryota"/>
</dbReference>
<dbReference type="GeneTree" id="ENSGT00950000183105"/>
<dbReference type="HOGENOM" id="CLU_089419_2_2_1"/>
<dbReference type="InParanoid" id="Q9UHA3"/>
<dbReference type="OMA" id="TCYFCSG"/>
<dbReference type="OrthoDB" id="9525201at2759"/>
<dbReference type="PAN-GO" id="Q9UHA3">
    <property type="GO annotations" value="2 GO annotations based on evolutionary models"/>
</dbReference>
<dbReference type="PhylomeDB" id="Q9UHA3"/>
<dbReference type="TreeFam" id="TF314926"/>
<dbReference type="PathwayCommons" id="Q9UHA3"/>
<dbReference type="SignaLink" id="Q9UHA3"/>
<dbReference type="BioGRID-ORCS" id="51187">
    <property type="hits" value="767 hits in 1073 CRISPR screens"/>
</dbReference>
<dbReference type="CD-CODE" id="91857CE7">
    <property type="entry name" value="Nucleolus"/>
</dbReference>
<dbReference type="ChiTaRS" id="RSL24D1">
    <property type="organism name" value="human"/>
</dbReference>
<dbReference type="GeneWiki" id="C15orf15"/>
<dbReference type="GenomeRNAi" id="51187"/>
<dbReference type="Pharos" id="Q9UHA3">
    <property type="development level" value="Tbio"/>
</dbReference>
<dbReference type="PRO" id="PR:Q9UHA3"/>
<dbReference type="Proteomes" id="UP000005640">
    <property type="component" value="Chromosome 15"/>
</dbReference>
<dbReference type="RNAct" id="Q9UHA3">
    <property type="molecule type" value="protein"/>
</dbReference>
<dbReference type="Bgee" id="ENSG00000137876">
    <property type="expression patterns" value="Expressed in germinal epithelium of ovary and 206 other cell types or tissues"/>
</dbReference>
<dbReference type="ExpressionAtlas" id="Q9UHA3">
    <property type="expression patterns" value="baseline and differential"/>
</dbReference>
<dbReference type="GO" id="GO:0005730">
    <property type="term" value="C:nucleolus"/>
    <property type="evidence" value="ECO:0000314"/>
    <property type="project" value="HPA"/>
</dbReference>
<dbReference type="GO" id="GO:0005654">
    <property type="term" value="C:nucleoplasm"/>
    <property type="evidence" value="ECO:0000314"/>
    <property type="project" value="HPA"/>
</dbReference>
<dbReference type="GO" id="GO:0003735">
    <property type="term" value="F:structural constituent of ribosome"/>
    <property type="evidence" value="ECO:0007669"/>
    <property type="project" value="InterPro"/>
</dbReference>
<dbReference type="GO" id="GO:0042273">
    <property type="term" value="P:ribosomal large subunit biogenesis"/>
    <property type="evidence" value="ECO:0000318"/>
    <property type="project" value="GO_Central"/>
</dbReference>
<dbReference type="CDD" id="cd00472">
    <property type="entry name" value="Ribosomal_L24e_L24"/>
    <property type="match status" value="1"/>
</dbReference>
<dbReference type="FunFam" id="2.30.170.20:FF:000001">
    <property type="entry name" value="probable ribosome biogenesis protein RLP24"/>
    <property type="match status" value="1"/>
</dbReference>
<dbReference type="Gene3D" id="2.30.170.20">
    <property type="entry name" value="Ribosomal protein L24e"/>
    <property type="match status" value="1"/>
</dbReference>
<dbReference type="HAMAP" id="MF_00773">
    <property type="entry name" value="Ribosomal_eL24"/>
    <property type="match status" value="1"/>
</dbReference>
<dbReference type="InterPro" id="IPR038630">
    <property type="entry name" value="L24e/L24_sf"/>
</dbReference>
<dbReference type="InterPro" id="IPR056366">
    <property type="entry name" value="Ribosomal_eL24"/>
</dbReference>
<dbReference type="InterPro" id="IPR055345">
    <property type="entry name" value="Ribosomal_eL24-rel_arc"/>
</dbReference>
<dbReference type="InterPro" id="IPR000988">
    <property type="entry name" value="Ribosomal_eL24-rel_N"/>
</dbReference>
<dbReference type="InterPro" id="IPR023442">
    <property type="entry name" value="Ribosomal_eL24_CS"/>
</dbReference>
<dbReference type="InterPro" id="IPR011017">
    <property type="entry name" value="TRASH_dom"/>
</dbReference>
<dbReference type="PANTHER" id="PTHR10792">
    <property type="entry name" value="60S RIBOSOMAL PROTEIN L24"/>
    <property type="match status" value="1"/>
</dbReference>
<dbReference type="PANTHER" id="PTHR10792:SF8">
    <property type="entry name" value="RIBOSOME BIOGENESIS PROTEIN RLP24-RELATED"/>
    <property type="match status" value="1"/>
</dbReference>
<dbReference type="Pfam" id="PF01246">
    <property type="entry name" value="Ribosomal_L24e"/>
    <property type="match status" value="1"/>
</dbReference>
<dbReference type="SMART" id="SM00746">
    <property type="entry name" value="TRASH"/>
    <property type="match status" value="1"/>
</dbReference>
<dbReference type="SUPFAM" id="SSF57716">
    <property type="entry name" value="Glucocorticoid receptor-like (DNA-binding domain)"/>
    <property type="match status" value="1"/>
</dbReference>
<dbReference type="PROSITE" id="PS01073">
    <property type="entry name" value="RIBOSOMAL_L24E"/>
    <property type="match status" value="1"/>
</dbReference>
<feature type="chain" id="PRO_0000136896" description="Probable ribosome biogenesis protein RLP24">
    <location>
        <begin position="1"/>
        <end position="163"/>
    </location>
</feature>
<feature type="sequence conflict" description="In Ref. 8; AAH08499." evidence="5" ref="8">
    <original>F</original>
    <variation>I</variation>
    <location>
        <position position="29"/>
    </location>
</feature>
<feature type="sequence conflict" description="In Ref. 8; AAH14576." evidence="5" ref="8">
    <original>R</original>
    <variation>G</variation>
    <location>
        <position position="30"/>
    </location>
</feature>
<feature type="sequence conflict" description="In Ref. 8; AAH28672." evidence="5" ref="8">
    <original>N</original>
    <variation>D</variation>
    <location>
        <position position="45"/>
    </location>
</feature>
<feature type="sequence conflict" description="In Ref. 8; AAH16312." evidence="5" ref="8">
    <original>W</original>
    <variation>R</variation>
    <location>
        <position position="86"/>
    </location>
</feature>
<feature type="sequence conflict" description="In Ref. 8; AAH28672." evidence="5" ref="8">
    <original>E</original>
    <variation>G</variation>
    <location>
        <position position="146"/>
    </location>
</feature>
<name>RLP24_HUMAN</name>
<accession>Q9UHA3</accession>
<accession>B2RD72</accession>
<accession>Q561V8</accession>
<accession>Q8N6S8</accession>
<accession>Q96B04</accession>
<accession>Q96C76</accession>
<accession>Q96HJ1</accession>
<protein>
    <recommendedName>
        <fullName>Probable ribosome biogenesis protein RLP24</fullName>
    </recommendedName>
    <alternativeName>
        <fullName>Ribosomal L24 domain-containing protein 1</fullName>
    </alternativeName>
    <alternativeName>
        <fullName>Ribosomal protein L24-like</fullName>
    </alternativeName>
</protein>
<keyword id="KW-0002">3D-structure</keyword>
<keyword id="KW-0539">Nucleus</keyword>
<keyword id="KW-1267">Proteomics identification</keyword>
<keyword id="KW-1185">Reference proteome</keyword>
<keyword id="KW-0690">Ribosome biogenesis</keyword>
<evidence type="ECO:0000250" key="1">
    <source>
        <dbReference type="UniProtKB" id="Q07915"/>
    </source>
</evidence>
<evidence type="ECO:0000269" key="2">
    <source>
    </source>
</evidence>
<evidence type="ECO:0000269" key="3">
    <source>
    </source>
</evidence>
<evidence type="ECO:0000269" key="4">
    <source>
    </source>
</evidence>
<evidence type="ECO:0000305" key="5"/>
<evidence type="ECO:0007744" key="6">
    <source>
        <dbReference type="PDB" id="6LSS"/>
    </source>
</evidence>
<evidence type="ECO:0007744" key="7">
    <source>
        <dbReference type="PDB" id="6LU8"/>
    </source>
</evidence>
<proteinExistence type="evidence at protein level"/>
<gene>
    <name type="primary">RSL24D1</name>
    <name type="synonym">C15orf15</name>
    <name type="synonym">RPL24L</name>
    <name type="ORF">My024</name>
</gene>